<gene>
    <name type="ordered locus">HAPS_0727</name>
</gene>
<comment type="similarity">
    <text evidence="1">Belongs to the UPF0319 family.</text>
</comment>
<keyword id="KW-1185">Reference proteome</keyword>
<keyword id="KW-0732">Signal</keyword>
<name>Y727_GLAP5</name>
<protein>
    <recommendedName>
        <fullName evidence="1">UPF0319 protein HAPS_0727</fullName>
    </recommendedName>
</protein>
<reference key="1">
    <citation type="journal article" date="2009" name="J. Bacteriol.">
        <title>Complete genome sequence of Haemophilus parasuis SH0165.</title>
        <authorList>
            <person name="Yue M."/>
            <person name="Yang F."/>
            <person name="Yang J."/>
            <person name="Bei W."/>
            <person name="Cai X."/>
            <person name="Chen L."/>
            <person name="Dong J."/>
            <person name="Zhou R."/>
            <person name="Jin M."/>
            <person name="Jin Q."/>
            <person name="Chen H."/>
        </authorList>
    </citation>
    <scope>NUCLEOTIDE SEQUENCE [LARGE SCALE GENOMIC DNA]</scope>
    <source>
        <strain>SH0165</strain>
    </source>
</reference>
<sequence>MKLGKIALAMTALIAGTTAFAGTITGSSNVTFLAFDGQKVRRNTNLQVNDTNLHQVVVEISSIYQSGSDSAFFESQPIILTFEGSTEDIKILAPSLNSEFDIAQFKKSPSFKIETVSGKKLTYKQDFLKGEGFMPNSNIINNLANYNIGEGVAAVQKFALSTMPITMANNTNKVNKGKIVVQGENVTEQQLQYWFQQADKETQKRFLDWAKKQ</sequence>
<feature type="signal peptide" evidence="1">
    <location>
        <begin position="1"/>
        <end position="21"/>
    </location>
</feature>
<feature type="chain" id="PRO_1000148489" description="UPF0319 protein HAPS_0727">
    <location>
        <begin position="22"/>
        <end position="213"/>
    </location>
</feature>
<dbReference type="EMBL" id="CP001321">
    <property type="protein sequence ID" value="ACL32373.1"/>
    <property type="molecule type" value="Genomic_DNA"/>
</dbReference>
<dbReference type="RefSeq" id="WP_005710704.1">
    <property type="nucleotide sequence ID" value="NC_011852.1"/>
</dbReference>
<dbReference type="STRING" id="557723.HAPS_0727"/>
<dbReference type="KEGG" id="hap:HAPS_0727"/>
<dbReference type="HOGENOM" id="CLU_073782_2_0_6"/>
<dbReference type="Proteomes" id="UP000006743">
    <property type="component" value="Chromosome"/>
</dbReference>
<dbReference type="HAMAP" id="MF_00789">
    <property type="entry name" value="UPF0319"/>
    <property type="match status" value="1"/>
</dbReference>
<dbReference type="InterPro" id="IPR018635">
    <property type="entry name" value="UPF0319"/>
</dbReference>
<dbReference type="NCBIfam" id="NF002516">
    <property type="entry name" value="PRK01904.1"/>
    <property type="match status" value="1"/>
</dbReference>
<dbReference type="PANTHER" id="PTHR38108">
    <property type="entry name" value="UPF0319 PROTEIN YCCT"/>
    <property type="match status" value="1"/>
</dbReference>
<dbReference type="PANTHER" id="PTHR38108:SF1">
    <property type="entry name" value="UPF0319 PROTEIN YCCT"/>
    <property type="match status" value="1"/>
</dbReference>
<dbReference type="Pfam" id="PF09829">
    <property type="entry name" value="DUF2057"/>
    <property type="match status" value="1"/>
</dbReference>
<proteinExistence type="inferred from homology"/>
<organism>
    <name type="scientific">Glaesserella parasuis serovar 5 (strain SH0165)</name>
    <name type="common">Haemophilus parasuis</name>
    <dbReference type="NCBI Taxonomy" id="557723"/>
    <lineage>
        <taxon>Bacteria</taxon>
        <taxon>Pseudomonadati</taxon>
        <taxon>Pseudomonadota</taxon>
        <taxon>Gammaproteobacteria</taxon>
        <taxon>Pasteurellales</taxon>
        <taxon>Pasteurellaceae</taxon>
        <taxon>Glaesserella</taxon>
    </lineage>
</organism>
<accession>B8F4X1</accession>
<evidence type="ECO:0000255" key="1">
    <source>
        <dbReference type="HAMAP-Rule" id="MF_00789"/>
    </source>
</evidence>